<accession>B1LHB3</accession>
<reference key="1">
    <citation type="journal article" date="2008" name="J. Bacteriol.">
        <title>Insights into the environmental resistance gene pool from the genome sequence of the multidrug-resistant environmental isolate Escherichia coli SMS-3-5.</title>
        <authorList>
            <person name="Fricke W.F."/>
            <person name="Wright M.S."/>
            <person name="Lindell A.H."/>
            <person name="Harkins D.M."/>
            <person name="Baker-Austin C."/>
            <person name="Ravel J."/>
            <person name="Stepanauskas R."/>
        </authorList>
    </citation>
    <scope>NUCLEOTIDE SEQUENCE [LARGE SCALE GENOMIC DNA]</scope>
    <source>
        <strain>SMS-3-5 / SECEC</strain>
    </source>
</reference>
<protein>
    <recommendedName>
        <fullName evidence="1">Large ribosomal subunit protein bL36A</fullName>
    </recommendedName>
    <alternativeName>
        <fullName evidence="2">50S ribosomal protein L36 1</fullName>
    </alternativeName>
</protein>
<organism>
    <name type="scientific">Escherichia coli (strain SMS-3-5 / SECEC)</name>
    <dbReference type="NCBI Taxonomy" id="439855"/>
    <lineage>
        <taxon>Bacteria</taxon>
        <taxon>Pseudomonadati</taxon>
        <taxon>Pseudomonadota</taxon>
        <taxon>Gammaproteobacteria</taxon>
        <taxon>Enterobacterales</taxon>
        <taxon>Enterobacteriaceae</taxon>
        <taxon>Escherichia</taxon>
    </lineage>
</organism>
<name>RL361_ECOSM</name>
<dbReference type="EMBL" id="CP000970">
    <property type="protein sequence ID" value="ACB18455.1"/>
    <property type="molecule type" value="Genomic_DNA"/>
</dbReference>
<dbReference type="SMR" id="B1LHB3"/>
<dbReference type="KEGG" id="ecm:EcSMS35_3594"/>
<dbReference type="HOGENOM" id="CLU_135723_6_2_6"/>
<dbReference type="Proteomes" id="UP000007011">
    <property type="component" value="Chromosome"/>
</dbReference>
<dbReference type="GO" id="GO:0005737">
    <property type="term" value="C:cytoplasm"/>
    <property type="evidence" value="ECO:0007669"/>
    <property type="project" value="UniProtKB-ARBA"/>
</dbReference>
<dbReference type="GO" id="GO:1990904">
    <property type="term" value="C:ribonucleoprotein complex"/>
    <property type="evidence" value="ECO:0007669"/>
    <property type="project" value="UniProtKB-KW"/>
</dbReference>
<dbReference type="GO" id="GO:0005840">
    <property type="term" value="C:ribosome"/>
    <property type="evidence" value="ECO:0007669"/>
    <property type="project" value="UniProtKB-KW"/>
</dbReference>
<dbReference type="GO" id="GO:0003735">
    <property type="term" value="F:structural constituent of ribosome"/>
    <property type="evidence" value="ECO:0007669"/>
    <property type="project" value="InterPro"/>
</dbReference>
<dbReference type="GO" id="GO:0006412">
    <property type="term" value="P:translation"/>
    <property type="evidence" value="ECO:0007669"/>
    <property type="project" value="UniProtKB-UniRule"/>
</dbReference>
<dbReference type="HAMAP" id="MF_00251">
    <property type="entry name" value="Ribosomal_bL36"/>
    <property type="match status" value="1"/>
</dbReference>
<dbReference type="InterPro" id="IPR000473">
    <property type="entry name" value="Ribosomal_bL36"/>
</dbReference>
<dbReference type="InterPro" id="IPR035977">
    <property type="entry name" value="Ribosomal_bL36_sp"/>
</dbReference>
<dbReference type="NCBIfam" id="TIGR01022">
    <property type="entry name" value="rpmJ_bact"/>
    <property type="match status" value="1"/>
</dbReference>
<dbReference type="PANTHER" id="PTHR42888">
    <property type="entry name" value="50S RIBOSOMAL PROTEIN L36, CHLOROPLASTIC"/>
    <property type="match status" value="1"/>
</dbReference>
<dbReference type="PANTHER" id="PTHR42888:SF1">
    <property type="entry name" value="LARGE RIBOSOMAL SUBUNIT PROTEIN BL36C"/>
    <property type="match status" value="1"/>
</dbReference>
<dbReference type="Pfam" id="PF00444">
    <property type="entry name" value="Ribosomal_L36"/>
    <property type="match status" value="1"/>
</dbReference>
<dbReference type="SUPFAM" id="SSF57840">
    <property type="entry name" value="Ribosomal protein L36"/>
    <property type="match status" value="1"/>
</dbReference>
<dbReference type="PROSITE" id="PS00828">
    <property type="entry name" value="RIBOSOMAL_L36"/>
    <property type="match status" value="1"/>
</dbReference>
<keyword id="KW-0687">Ribonucleoprotein</keyword>
<keyword id="KW-0689">Ribosomal protein</keyword>
<proteinExistence type="inferred from homology"/>
<sequence>MKVRASVKKLCRNCKIVKRDGVIRVICSAEPKHKQRQG</sequence>
<evidence type="ECO:0000255" key="1">
    <source>
        <dbReference type="HAMAP-Rule" id="MF_00251"/>
    </source>
</evidence>
<evidence type="ECO:0000305" key="2"/>
<gene>
    <name evidence="1" type="primary">rpmJ1</name>
    <name type="ordered locus">EcSMS35_3594</name>
</gene>
<comment type="similarity">
    <text evidence="1">Belongs to the bacterial ribosomal protein bL36 family.</text>
</comment>
<feature type="chain" id="PRO_0000344672" description="Large ribosomal subunit protein bL36A">
    <location>
        <begin position="1"/>
        <end position="38"/>
    </location>
</feature>